<evidence type="ECO:0000250" key="1">
    <source>
        <dbReference type="UniProtKB" id="M4QN28"/>
    </source>
</evidence>
<evidence type="ECO:0000269" key="2">
    <source>
    </source>
</evidence>
<evidence type="ECO:0000303" key="3">
    <source>
    </source>
</evidence>
<evidence type="ECO:0000305" key="4"/>
<feature type="chain" id="PRO_0000459434" description="Serotype-specific mannosyltransferase WbdA">
    <location>
        <begin position="1"/>
        <end position="815"/>
    </location>
</feature>
<feature type="region of interest" description="Alpha-(1-&gt;2)-mannosyltransferase" evidence="1">
    <location>
        <begin position="1"/>
        <end position="374"/>
    </location>
</feature>
<feature type="region of interest" description="Alpha-(1-&gt;3)-mannosyltransferase" evidence="1">
    <location>
        <begin position="431"/>
        <end position="804"/>
    </location>
</feature>
<feature type="mutagenesis site" description="Causes the conversion of the O9 polysaccharide into O9a serotype." evidence="2">
    <original>C</original>
    <variation>R</variation>
    <location>
        <position position="55"/>
    </location>
</feature>
<accession>Q9LC67</accession>
<dbReference type="EC" id="2.4.1.-" evidence="4"/>
<dbReference type="EMBL" id="AB031867">
    <property type="protein sequence ID" value="BAA92236.1"/>
    <property type="molecule type" value="Genomic_DNA"/>
</dbReference>
<dbReference type="SMR" id="Q9LC67"/>
<dbReference type="CAZy" id="GT4">
    <property type="family name" value="Glycosyltransferase Family 4"/>
</dbReference>
<dbReference type="BioCyc" id="MetaCyc:MONOMER-20267"/>
<dbReference type="UniPathway" id="UPA00281"/>
<dbReference type="GO" id="GO:0005886">
    <property type="term" value="C:plasma membrane"/>
    <property type="evidence" value="ECO:0007669"/>
    <property type="project" value="UniProtKB-SubCell"/>
</dbReference>
<dbReference type="GO" id="GO:0016757">
    <property type="term" value="F:glycosyltransferase activity"/>
    <property type="evidence" value="ECO:0007669"/>
    <property type="project" value="UniProtKB-KW"/>
</dbReference>
<dbReference type="GO" id="GO:0009243">
    <property type="term" value="P:O antigen biosynthetic process"/>
    <property type="evidence" value="ECO:0007669"/>
    <property type="project" value="UniProtKB-UniPathway"/>
</dbReference>
<dbReference type="CDD" id="cd03809">
    <property type="entry name" value="GT4_MtfB-like"/>
    <property type="match status" value="2"/>
</dbReference>
<dbReference type="Gene3D" id="3.40.50.2000">
    <property type="entry name" value="Glycogen Phosphorylase B"/>
    <property type="match status" value="3"/>
</dbReference>
<dbReference type="InterPro" id="IPR001296">
    <property type="entry name" value="Glyco_trans_1"/>
</dbReference>
<dbReference type="PANTHER" id="PTHR46401">
    <property type="entry name" value="GLYCOSYLTRANSFERASE WBBK-RELATED"/>
    <property type="match status" value="1"/>
</dbReference>
<dbReference type="PANTHER" id="PTHR46401:SF2">
    <property type="entry name" value="GLYCOSYLTRANSFERASE WBBK-RELATED"/>
    <property type="match status" value="1"/>
</dbReference>
<dbReference type="Pfam" id="PF00534">
    <property type="entry name" value="Glycos_transf_1"/>
    <property type="match status" value="2"/>
</dbReference>
<dbReference type="SUPFAM" id="SSF53756">
    <property type="entry name" value="UDP-Glycosyltransferase/glycogen phosphorylase"/>
    <property type="match status" value="2"/>
</dbReference>
<keyword id="KW-0997">Cell inner membrane</keyword>
<keyword id="KW-1003">Cell membrane</keyword>
<keyword id="KW-0328">Glycosyltransferase</keyword>
<keyword id="KW-0472">Membrane</keyword>
<keyword id="KW-0808">Transferase</keyword>
<protein>
    <recommendedName>
        <fullName evidence="4">Serotype-specific mannosyltransferase WbdA</fullName>
        <ecNumber evidence="4">2.4.1.-</ecNumber>
    </recommendedName>
    <alternativeName>
        <fullName evidence="4">O-antigen chain mannosyltransferase A</fullName>
    </alternativeName>
</protein>
<proteinExistence type="evidence at protein level"/>
<gene>
    <name evidence="3" type="primary">wbdA</name>
</gene>
<organism>
    <name type="scientific">Escherichia coli</name>
    <dbReference type="NCBI Taxonomy" id="562"/>
    <lineage>
        <taxon>Bacteria</taxon>
        <taxon>Pseudomonadati</taxon>
        <taxon>Pseudomonadota</taxon>
        <taxon>Gammaproteobacteria</taxon>
        <taxon>Enterobacterales</taxon>
        <taxon>Enterobacteriaceae</taxon>
        <taxon>Escherichia</taxon>
    </lineage>
</organism>
<comment type="function">
    <text evidence="2">Mannosyltransferase involved in the biosynthesis of the repeat unit of the lipopolysaccharide (LPS) O-antigen region.</text>
</comment>
<comment type="pathway">
    <text evidence="2">Bacterial outer membrane biogenesis; LPS O-antigen biosynthesis.</text>
</comment>
<comment type="subcellular location">
    <subcellularLocation>
        <location evidence="1">Cell inner membrane</location>
        <topology evidence="1">Peripheral membrane protein</topology>
    </subcellularLocation>
</comment>
<comment type="similarity">
    <text evidence="4">Belongs to the glycosyltransferase group 1 family. Glycosyltransferase 4 subfamily.</text>
</comment>
<name>WBDA3_ECOLX</name>
<sequence length="815" mass="91221">MSRAIIENAGEHRVSILINGMYSIENINDVKMAYRDLLTDEDMFIFSAVAPTAYCNIDNHGRSKAAQAARDIAIANIAPDIVYVISFFEGHGDSYTVSIPADDVPWKTVCVCHDLIPLLNKERYLGDPNFREFYMNKLAEFERADAIFAISQSAAQEVIEYTDIPSDRVLNISSAVGEDFAVIDYSAEHIQSLKDKYRLPDEFILTLAMIEPRKNIEAPIHAYSMLPAELQQRYPMVLAYKVHPEGLERILRLAESYGLSRSQLIFTGFLTDDDLIALYNLCKLFVFPSLHEGFGLPPLEAMRCGAATLGSNITSLPEVIGWEDAMFNPHDVQDIRRVMEKALTDEAFYRELKAHALTQSAKFSWANTAHLAIDGFTRLLQSSKEVDAGQTEGVTTSRIQTMQKIDALSEVDRLGLAWAVARNGYKQHTRKLLVDISVLAKHDAKTGIQRVSRSILSELLKSGVPGYEVSAVYYTPGECYRYANQYLSSNFPGEYGADEPVLFSKDDILIATDLTAHLFPEVVTQIDCMRAAGAFACFVVHDILPLRRPEWSIEGIQREFPIWLSCLAEHADRLICVSASVAEDVKAWIAENSHWVKPNPLLTVSNFHLGADLDASVPSTGMPDNAQALLATMAAAPSFIMVGTMEPRKGHAQTLAAFEELWCEGKNYNLFIVGKQGWNVDSLCEKLRHHPQLNKKLFWLQNISDEFLVELYARSRALIFASQGEGFGLPLIEAAQKKLPVIIRDIPVFKEIAQEHAWYFSGEAPADIAKAVEDWLALYEQNAHPRSENINWLTWKQSAELLLKNLPIIAPAAKQ</sequence>
<reference key="1">
    <citation type="journal article" date="2000" name="J. Bacteriol.">
        <title>A single amino acid substitution in a mannosyltransferase, WbdA, converts the Escherichia coli O9 polysaccharide into O9a: generation of a new O-serotype group.</title>
        <authorList>
            <person name="Kido N."/>
            <person name="Kobayashi H."/>
        </authorList>
    </citation>
    <scope>NUCLEOTIDE SEQUENCE [GENOMIC DNA]</scope>
    <scope>FUNCTION</scope>
    <scope>PATHWAY</scope>
    <scope>MUTAGENESIS OF CYS-55</scope>
    <source>
        <strain>O9:K9:H12 / Bi316-42</strain>
    </source>
</reference>